<accession>Q6GC09</accession>
<proteinExistence type="inferred from homology"/>
<keyword id="KW-0963">Cytoplasm</keyword>
<keyword id="KW-0238">DNA-binding</keyword>
<feature type="chain" id="PRO_0000170439" description="Nucleoid-associated protein SAS0436">
    <location>
        <begin position="1"/>
        <end position="105"/>
    </location>
</feature>
<feature type="region of interest" description="Disordered" evidence="2">
    <location>
        <begin position="1"/>
        <end position="33"/>
    </location>
</feature>
<feature type="compositionally biased region" description="Low complexity" evidence="2">
    <location>
        <begin position="7"/>
        <end position="16"/>
    </location>
</feature>
<feature type="compositionally biased region" description="Basic and acidic residues" evidence="2">
    <location>
        <begin position="21"/>
        <end position="33"/>
    </location>
</feature>
<dbReference type="EMBL" id="BX571857">
    <property type="protein sequence ID" value="CAG42211.1"/>
    <property type="molecule type" value="Genomic_DNA"/>
</dbReference>
<dbReference type="RefSeq" id="WP_001213992.1">
    <property type="nucleotide sequence ID" value="NC_002953.3"/>
</dbReference>
<dbReference type="SMR" id="Q6GC09"/>
<dbReference type="KEGG" id="sas:SAS0436"/>
<dbReference type="HOGENOM" id="CLU_140930_1_0_9"/>
<dbReference type="GO" id="GO:0043590">
    <property type="term" value="C:bacterial nucleoid"/>
    <property type="evidence" value="ECO:0007669"/>
    <property type="project" value="UniProtKB-UniRule"/>
</dbReference>
<dbReference type="GO" id="GO:0005829">
    <property type="term" value="C:cytosol"/>
    <property type="evidence" value="ECO:0007669"/>
    <property type="project" value="TreeGrafter"/>
</dbReference>
<dbReference type="GO" id="GO:0003677">
    <property type="term" value="F:DNA binding"/>
    <property type="evidence" value="ECO:0007669"/>
    <property type="project" value="UniProtKB-UniRule"/>
</dbReference>
<dbReference type="FunFam" id="3.30.1310.10:FF:000002">
    <property type="entry name" value="Nucleoid-associated protein IKC_06587"/>
    <property type="match status" value="1"/>
</dbReference>
<dbReference type="Gene3D" id="3.30.1310.10">
    <property type="entry name" value="Nucleoid-associated protein YbaB-like domain"/>
    <property type="match status" value="1"/>
</dbReference>
<dbReference type="HAMAP" id="MF_00274">
    <property type="entry name" value="DNA_YbaB_EbfC"/>
    <property type="match status" value="1"/>
</dbReference>
<dbReference type="InterPro" id="IPR036894">
    <property type="entry name" value="YbaB-like_sf"/>
</dbReference>
<dbReference type="InterPro" id="IPR004401">
    <property type="entry name" value="YbaB/EbfC"/>
</dbReference>
<dbReference type="NCBIfam" id="TIGR00103">
    <property type="entry name" value="DNA_YbaB_EbfC"/>
    <property type="match status" value="1"/>
</dbReference>
<dbReference type="PANTHER" id="PTHR33449">
    <property type="entry name" value="NUCLEOID-ASSOCIATED PROTEIN YBAB"/>
    <property type="match status" value="1"/>
</dbReference>
<dbReference type="PANTHER" id="PTHR33449:SF1">
    <property type="entry name" value="NUCLEOID-ASSOCIATED PROTEIN YBAB"/>
    <property type="match status" value="1"/>
</dbReference>
<dbReference type="Pfam" id="PF02575">
    <property type="entry name" value="YbaB_DNA_bd"/>
    <property type="match status" value="1"/>
</dbReference>
<dbReference type="PIRSF" id="PIRSF004555">
    <property type="entry name" value="UCP004555"/>
    <property type="match status" value="1"/>
</dbReference>
<dbReference type="SUPFAM" id="SSF82607">
    <property type="entry name" value="YbaB-like"/>
    <property type="match status" value="1"/>
</dbReference>
<gene>
    <name type="ordered locus">SAS0436</name>
</gene>
<sequence>MRGGGNMQQMMKQMQKMQKKMAQEQEKLKEERIVGTAGGGMVAVTVTGHKEVVDVEIKEEAVDPDDIEMLQDLVLAATNEAMNKADELTQERLGKHTQGLNIPGM</sequence>
<organism>
    <name type="scientific">Staphylococcus aureus (strain MSSA476)</name>
    <dbReference type="NCBI Taxonomy" id="282459"/>
    <lineage>
        <taxon>Bacteria</taxon>
        <taxon>Bacillati</taxon>
        <taxon>Bacillota</taxon>
        <taxon>Bacilli</taxon>
        <taxon>Bacillales</taxon>
        <taxon>Staphylococcaceae</taxon>
        <taxon>Staphylococcus</taxon>
    </lineage>
</organism>
<reference key="1">
    <citation type="journal article" date="2004" name="Proc. Natl. Acad. Sci. U.S.A.">
        <title>Complete genomes of two clinical Staphylococcus aureus strains: evidence for the rapid evolution of virulence and drug resistance.</title>
        <authorList>
            <person name="Holden M.T.G."/>
            <person name="Feil E.J."/>
            <person name="Lindsay J.A."/>
            <person name="Peacock S.J."/>
            <person name="Day N.P.J."/>
            <person name="Enright M.C."/>
            <person name="Foster T.J."/>
            <person name="Moore C.E."/>
            <person name="Hurst L."/>
            <person name="Atkin R."/>
            <person name="Barron A."/>
            <person name="Bason N."/>
            <person name="Bentley S.D."/>
            <person name="Chillingworth C."/>
            <person name="Chillingworth T."/>
            <person name="Churcher C."/>
            <person name="Clark L."/>
            <person name="Corton C."/>
            <person name="Cronin A."/>
            <person name="Doggett J."/>
            <person name="Dowd L."/>
            <person name="Feltwell T."/>
            <person name="Hance Z."/>
            <person name="Harris B."/>
            <person name="Hauser H."/>
            <person name="Holroyd S."/>
            <person name="Jagels K."/>
            <person name="James K.D."/>
            <person name="Lennard N."/>
            <person name="Line A."/>
            <person name="Mayes R."/>
            <person name="Moule S."/>
            <person name="Mungall K."/>
            <person name="Ormond D."/>
            <person name="Quail M.A."/>
            <person name="Rabbinowitsch E."/>
            <person name="Rutherford K.M."/>
            <person name="Sanders M."/>
            <person name="Sharp S."/>
            <person name="Simmonds M."/>
            <person name="Stevens K."/>
            <person name="Whitehead S."/>
            <person name="Barrell B.G."/>
            <person name="Spratt B.G."/>
            <person name="Parkhill J."/>
        </authorList>
    </citation>
    <scope>NUCLEOTIDE SEQUENCE [LARGE SCALE GENOMIC DNA]</scope>
    <source>
        <strain>MSSA476</strain>
    </source>
</reference>
<protein>
    <recommendedName>
        <fullName evidence="1">Nucleoid-associated protein SAS0436</fullName>
    </recommendedName>
</protein>
<comment type="function">
    <text evidence="1">Binds to DNA and alters its conformation. May be involved in regulation of gene expression, nucleoid organization and DNA protection.</text>
</comment>
<comment type="subunit">
    <text evidence="1">Homodimer.</text>
</comment>
<comment type="subcellular location">
    <subcellularLocation>
        <location evidence="1">Cytoplasm</location>
        <location evidence="1">Nucleoid</location>
    </subcellularLocation>
</comment>
<comment type="similarity">
    <text evidence="1">Belongs to the YbaB/EbfC family.</text>
</comment>
<evidence type="ECO:0000255" key="1">
    <source>
        <dbReference type="HAMAP-Rule" id="MF_00274"/>
    </source>
</evidence>
<evidence type="ECO:0000256" key="2">
    <source>
        <dbReference type="SAM" id="MobiDB-lite"/>
    </source>
</evidence>
<name>Y436_STAAS</name>